<reference key="1">
    <citation type="journal article" date="2006" name="Lancet">
        <title>Complete genome sequence of USA300, an epidemic clone of community-acquired meticillin-resistant Staphylococcus aureus.</title>
        <authorList>
            <person name="Diep B.A."/>
            <person name="Gill S.R."/>
            <person name="Chang R.F."/>
            <person name="Phan T.H."/>
            <person name="Chen J.H."/>
            <person name="Davidson M.G."/>
            <person name="Lin F."/>
            <person name="Lin J."/>
            <person name="Carleton H.A."/>
            <person name="Mongodin E.F."/>
            <person name="Sensabaugh G.F."/>
            <person name="Perdreau-Remington F."/>
        </authorList>
    </citation>
    <scope>NUCLEOTIDE SEQUENCE [LARGE SCALE GENOMIC DNA]</scope>
    <source>
        <strain>USA300</strain>
    </source>
</reference>
<sequence length="341" mass="36819">MTKDILILAVETSCDETSVSVIKNGRDILSNTVLSQIESHKRFGGVVPEVASRHHVEGITATINEALGDADVSIEDIDAIAVTEGPGLIGALLIGVNAAKALAFAYDKPLIPVHHIAGHIYANHIEEPLTFPLIALIVSGGHTELVYMKDHLSFEVIGETRDDAVGEAYDKVARTIGLNYPGGPQVDRLAAEGEDTYSFPRVWLDKDSYDFSFSGLKSAVINQLHNQRQKNIPIIEANVATSFQNSVVEVLTFKAIQACKEYGVQRLIVAGGVASNKGLRQSLADQCKVNDIQLTIPSPKLCTDNAAMIGVAGHYLYQQGRFADLALNGHSNIDLEEYSAE</sequence>
<organism>
    <name type="scientific">Staphylococcus aureus (strain USA300)</name>
    <dbReference type="NCBI Taxonomy" id="367830"/>
    <lineage>
        <taxon>Bacteria</taxon>
        <taxon>Bacillati</taxon>
        <taxon>Bacillota</taxon>
        <taxon>Bacilli</taxon>
        <taxon>Bacillales</taxon>
        <taxon>Staphylococcaceae</taxon>
        <taxon>Staphylococcus</taxon>
    </lineage>
</organism>
<evidence type="ECO:0000255" key="1">
    <source>
        <dbReference type="HAMAP-Rule" id="MF_01445"/>
    </source>
</evidence>
<accession>Q2FF75</accession>
<proteinExistence type="inferred from homology"/>
<feature type="chain" id="PRO_0000303552" description="tRNA N6-adenosine threonylcarbamoyltransferase">
    <location>
        <begin position="1"/>
        <end position="341"/>
    </location>
</feature>
<feature type="binding site" evidence="1">
    <location>
        <position position="115"/>
    </location>
    <ligand>
        <name>Fe cation</name>
        <dbReference type="ChEBI" id="CHEBI:24875"/>
    </ligand>
</feature>
<feature type="binding site" evidence="1">
    <location>
        <position position="119"/>
    </location>
    <ligand>
        <name>Fe cation</name>
        <dbReference type="ChEBI" id="CHEBI:24875"/>
    </ligand>
</feature>
<feature type="binding site" evidence="1">
    <location>
        <begin position="137"/>
        <end position="141"/>
    </location>
    <ligand>
        <name>substrate</name>
    </ligand>
</feature>
<feature type="binding site" evidence="1">
    <location>
        <position position="170"/>
    </location>
    <ligand>
        <name>substrate</name>
    </ligand>
</feature>
<feature type="binding site" evidence="1">
    <location>
        <position position="183"/>
    </location>
    <ligand>
        <name>substrate</name>
    </ligand>
</feature>
<feature type="binding site" evidence="1">
    <location>
        <position position="187"/>
    </location>
    <ligand>
        <name>substrate</name>
    </ligand>
</feature>
<feature type="binding site" evidence="1">
    <location>
        <position position="276"/>
    </location>
    <ligand>
        <name>substrate</name>
    </ligand>
</feature>
<feature type="binding site" evidence="1">
    <location>
        <position position="304"/>
    </location>
    <ligand>
        <name>Fe cation</name>
        <dbReference type="ChEBI" id="CHEBI:24875"/>
    </ligand>
</feature>
<keyword id="KW-0012">Acyltransferase</keyword>
<keyword id="KW-0963">Cytoplasm</keyword>
<keyword id="KW-0408">Iron</keyword>
<keyword id="KW-0479">Metal-binding</keyword>
<keyword id="KW-0808">Transferase</keyword>
<keyword id="KW-0819">tRNA processing</keyword>
<comment type="function">
    <text evidence="1">Required for the formation of a threonylcarbamoyl group on adenosine at position 37 (t(6)A37) in tRNAs that read codons beginning with adenine. Is involved in the transfer of the threonylcarbamoyl moiety of threonylcarbamoyl-AMP (TC-AMP) to the N6 group of A37, together with TsaE and TsaB. TsaD likely plays a direct catalytic role in this reaction.</text>
</comment>
<comment type="catalytic activity">
    <reaction evidence="1">
        <text>L-threonylcarbamoyladenylate + adenosine(37) in tRNA = N(6)-L-threonylcarbamoyladenosine(37) in tRNA + AMP + H(+)</text>
        <dbReference type="Rhea" id="RHEA:37059"/>
        <dbReference type="Rhea" id="RHEA-COMP:10162"/>
        <dbReference type="Rhea" id="RHEA-COMP:10163"/>
        <dbReference type="ChEBI" id="CHEBI:15378"/>
        <dbReference type="ChEBI" id="CHEBI:73682"/>
        <dbReference type="ChEBI" id="CHEBI:74411"/>
        <dbReference type="ChEBI" id="CHEBI:74418"/>
        <dbReference type="ChEBI" id="CHEBI:456215"/>
        <dbReference type="EC" id="2.3.1.234"/>
    </reaction>
</comment>
<comment type="cofactor">
    <cofactor evidence="1">
        <name>Fe(2+)</name>
        <dbReference type="ChEBI" id="CHEBI:29033"/>
    </cofactor>
    <text evidence="1">Binds 1 Fe(2+) ion per subunit.</text>
</comment>
<comment type="subcellular location">
    <subcellularLocation>
        <location evidence="1">Cytoplasm</location>
    </subcellularLocation>
</comment>
<comment type="similarity">
    <text evidence="1">Belongs to the KAE1 / TsaD family.</text>
</comment>
<protein>
    <recommendedName>
        <fullName evidence="1">tRNA N6-adenosine threonylcarbamoyltransferase</fullName>
        <ecNumber evidence="1">2.3.1.234</ecNumber>
    </recommendedName>
    <alternativeName>
        <fullName evidence="1">N6-L-threonylcarbamoyladenine synthase</fullName>
        <shortName evidence="1">t(6)A synthase</shortName>
    </alternativeName>
    <alternativeName>
        <fullName evidence="1">t(6)A37 threonylcarbamoyladenosine biosynthesis protein TsaD</fullName>
    </alternativeName>
    <alternativeName>
        <fullName evidence="1">tRNA threonylcarbamoyladenosine biosynthesis protein TsaD</fullName>
    </alternativeName>
</protein>
<name>TSAD_STAA3</name>
<gene>
    <name evidence="1" type="primary">tsaD</name>
    <name type="synonym">gcp</name>
    <name type="ordered locus">SAUSA300_2002</name>
</gene>
<dbReference type="EC" id="2.3.1.234" evidence="1"/>
<dbReference type="EMBL" id="CP000255">
    <property type="protein sequence ID" value="ABD21367.1"/>
    <property type="molecule type" value="Genomic_DNA"/>
</dbReference>
<dbReference type="RefSeq" id="WP_000159034.1">
    <property type="nucleotide sequence ID" value="NZ_CP027476.1"/>
</dbReference>
<dbReference type="SMR" id="Q2FF75"/>
<dbReference type="KEGG" id="saa:SAUSA300_2002"/>
<dbReference type="HOGENOM" id="CLU_023208_0_2_9"/>
<dbReference type="OMA" id="NAAMIGC"/>
<dbReference type="Proteomes" id="UP000001939">
    <property type="component" value="Chromosome"/>
</dbReference>
<dbReference type="GO" id="GO:0005737">
    <property type="term" value="C:cytoplasm"/>
    <property type="evidence" value="ECO:0007669"/>
    <property type="project" value="UniProtKB-SubCell"/>
</dbReference>
<dbReference type="GO" id="GO:0005506">
    <property type="term" value="F:iron ion binding"/>
    <property type="evidence" value="ECO:0007669"/>
    <property type="project" value="UniProtKB-UniRule"/>
</dbReference>
<dbReference type="GO" id="GO:0061711">
    <property type="term" value="F:N(6)-L-threonylcarbamoyladenine synthase activity"/>
    <property type="evidence" value="ECO:0007669"/>
    <property type="project" value="UniProtKB-EC"/>
</dbReference>
<dbReference type="GO" id="GO:0002949">
    <property type="term" value="P:tRNA threonylcarbamoyladenosine modification"/>
    <property type="evidence" value="ECO:0007669"/>
    <property type="project" value="UniProtKB-UniRule"/>
</dbReference>
<dbReference type="CDD" id="cd24133">
    <property type="entry name" value="ASKHA_NBD_TsaD_bac"/>
    <property type="match status" value="1"/>
</dbReference>
<dbReference type="FunFam" id="3.30.420.40:FF:000012">
    <property type="entry name" value="tRNA N6-adenosine threonylcarbamoyltransferase"/>
    <property type="match status" value="1"/>
</dbReference>
<dbReference type="FunFam" id="3.30.420.40:FF:000040">
    <property type="entry name" value="tRNA N6-adenosine threonylcarbamoyltransferase"/>
    <property type="match status" value="1"/>
</dbReference>
<dbReference type="Gene3D" id="3.30.420.40">
    <property type="match status" value="2"/>
</dbReference>
<dbReference type="HAMAP" id="MF_01445">
    <property type="entry name" value="TsaD"/>
    <property type="match status" value="1"/>
</dbReference>
<dbReference type="InterPro" id="IPR043129">
    <property type="entry name" value="ATPase_NBD"/>
</dbReference>
<dbReference type="InterPro" id="IPR000905">
    <property type="entry name" value="Gcp-like_dom"/>
</dbReference>
<dbReference type="InterPro" id="IPR017861">
    <property type="entry name" value="KAE1/TsaD"/>
</dbReference>
<dbReference type="InterPro" id="IPR017860">
    <property type="entry name" value="Peptidase_M22_CS"/>
</dbReference>
<dbReference type="InterPro" id="IPR022450">
    <property type="entry name" value="TsaD"/>
</dbReference>
<dbReference type="NCBIfam" id="TIGR00329">
    <property type="entry name" value="gcp_kae1"/>
    <property type="match status" value="1"/>
</dbReference>
<dbReference type="NCBIfam" id="TIGR03723">
    <property type="entry name" value="T6A_TsaD_YgjD"/>
    <property type="match status" value="1"/>
</dbReference>
<dbReference type="PANTHER" id="PTHR11735">
    <property type="entry name" value="TRNA N6-ADENOSINE THREONYLCARBAMOYLTRANSFERASE"/>
    <property type="match status" value="1"/>
</dbReference>
<dbReference type="PANTHER" id="PTHR11735:SF6">
    <property type="entry name" value="TRNA N6-ADENOSINE THREONYLCARBAMOYLTRANSFERASE, MITOCHONDRIAL"/>
    <property type="match status" value="1"/>
</dbReference>
<dbReference type="Pfam" id="PF00814">
    <property type="entry name" value="TsaD"/>
    <property type="match status" value="1"/>
</dbReference>
<dbReference type="PRINTS" id="PR00789">
    <property type="entry name" value="OSIALOPTASE"/>
</dbReference>
<dbReference type="SUPFAM" id="SSF53067">
    <property type="entry name" value="Actin-like ATPase domain"/>
    <property type="match status" value="2"/>
</dbReference>
<dbReference type="PROSITE" id="PS01016">
    <property type="entry name" value="GLYCOPROTEASE"/>
    <property type="match status" value="1"/>
</dbReference>